<feature type="chain" id="PRO_1000124205" description="Glycerol kinase">
    <location>
        <begin position="1"/>
        <end position="502"/>
    </location>
</feature>
<feature type="binding site" evidence="1">
    <location>
        <position position="14"/>
    </location>
    <ligand>
        <name>ADP</name>
        <dbReference type="ChEBI" id="CHEBI:456216"/>
    </ligand>
</feature>
<feature type="binding site" evidence="1">
    <location>
        <position position="14"/>
    </location>
    <ligand>
        <name>ATP</name>
        <dbReference type="ChEBI" id="CHEBI:30616"/>
    </ligand>
</feature>
<feature type="binding site" evidence="1">
    <location>
        <position position="14"/>
    </location>
    <ligand>
        <name>sn-glycerol 3-phosphate</name>
        <dbReference type="ChEBI" id="CHEBI:57597"/>
    </ligand>
</feature>
<feature type="binding site" evidence="1">
    <location>
        <position position="15"/>
    </location>
    <ligand>
        <name>ATP</name>
        <dbReference type="ChEBI" id="CHEBI:30616"/>
    </ligand>
</feature>
<feature type="binding site" evidence="1">
    <location>
        <position position="16"/>
    </location>
    <ligand>
        <name>ATP</name>
        <dbReference type="ChEBI" id="CHEBI:30616"/>
    </ligand>
</feature>
<feature type="binding site" evidence="1">
    <location>
        <position position="18"/>
    </location>
    <ligand>
        <name>ADP</name>
        <dbReference type="ChEBI" id="CHEBI:456216"/>
    </ligand>
</feature>
<feature type="binding site" evidence="1">
    <location>
        <position position="84"/>
    </location>
    <ligand>
        <name>glycerol</name>
        <dbReference type="ChEBI" id="CHEBI:17754"/>
    </ligand>
</feature>
<feature type="binding site" evidence="1">
    <location>
        <position position="84"/>
    </location>
    <ligand>
        <name>sn-glycerol 3-phosphate</name>
        <dbReference type="ChEBI" id="CHEBI:57597"/>
    </ligand>
</feature>
<feature type="binding site" evidence="1">
    <location>
        <position position="85"/>
    </location>
    <ligand>
        <name>glycerol</name>
        <dbReference type="ChEBI" id="CHEBI:17754"/>
    </ligand>
</feature>
<feature type="binding site" evidence="1">
    <location>
        <position position="85"/>
    </location>
    <ligand>
        <name>sn-glycerol 3-phosphate</name>
        <dbReference type="ChEBI" id="CHEBI:57597"/>
    </ligand>
</feature>
<feature type="binding site" evidence="1">
    <location>
        <position position="136"/>
    </location>
    <ligand>
        <name>glycerol</name>
        <dbReference type="ChEBI" id="CHEBI:17754"/>
    </ligand>
</feature>
<feature type="binding site" evidence="1">
    <location>
        <position position="136"/>
    </location>
    <ligand>
        <name>sn-glycerol 3-phosphate</name>
        <dbReference type="ChEBI" id="CHEBI:57597"/>
    </ligand>
</feature>
<feature type="binding site" evidence="1">
    <location>
        <position position="246"/>
    </location>
    <ligand>
        <name>glycerol</name>
        <dbReference type="ChEBI" id="CHEBI:17754"/>
    </ligand>
</feature>
<feature type="binding site" evidence="1">
    <location>
        <position position="246"/>
    </location>
    <ligand>
        <name>sn-glycerol 3-phosphate</name>
        <dbReference type="ChEBI" id="CHEBI:57597"/>
    </ligand>
</feature>
<feature type="binding site" evidence="1">
    <location>
        <position position="247"/>
    </location>
    <ligand>
        <name>glycerol</name>
        <dbReference type="ChEBI" id="CHEBI:17754"/>
    </ligand>
</feature>
<feature type="binding site" evidence="1">
    <location>
        <position position="268"/>
    </location>
    <ligand>
        <name>ADP</name>
        <dbReference type="ChEBI" id="CHEBI:456216"/>
    </ligand>
</feature>
<feature type="binding site" evidence="1">
    <location>
        <position position="268"/>
    </location>
    <ligand>
        <name>ATP</name>
        <dbReference type="ChEBI" id="CHEBI:30616"/>
    </ligand>
</feature>
<feature type="binding site" evidence="1">
    <location>
        <position position="311"/>
    </location>
    <ligand>
        <name>ADP</name>
        <dbReference type="ChEBI" id="CHEBI:456216"/>
    </ligand>
</feature>
<feature type="binding site" evidence="1">
    <location>
        <position position="311"/>
    </location>
    <ligand>
        <name>ATP</name>
        <dbReference type="ChEBI" id="CHEBI:30616"/>
    </ligand>
</feature>
<feature type="binding site" evidence="1">
    <location>
        <position position="315"/>
    </location>
    <ligand>
        <name>ATP</name>
        <dbReference type="ChEBI" id="CHEBI:30616"/>
    </ligand>
</feature>
<feature type="binding site" evidence="1">
    <location>
        <position position="412"/>
    </location>
    <ligand>
        <name>ADP</name>
        <dbReference type="ChEBI" id="CHEBI:456216"/>
    </ligand>
</feature>
<feature type="binding site" evidence="1">
    <location>
        <position position="412"/>
    </location>
    <ligand>
        <name>ATP</name>
        <dbReference type="ChEBI" id="CHEBI:30616"/>
    </ligand>
</feature>
<feature type="binding site" evidence="1">
    <location>
        <position position="416"/>
    </location>
    <ligand>
        <name>ADP</name>
        <dbReference type="ChEBI" id="CHEBI:456216"/>
    </ligand>
</feature>
<feature type="modified residue" description="Phosphohistidine; by HPr" evidence="1">
    <location>
        <position position="232"/>
    </location>
</feature>
<name>GLPK_STRP7</name>
<gene>
    <name evidence="1" type="primary">glpK</name>
    <name type="ordered locus">SP70585_2312</name>
</gene>
<reference key="1">
    <citation type="journal article" date="2010" name="Genome Biol.">
        <title>Structure and dynamics of the pan-genome of Streptococcus pneumoniae and closely related species.</title>
        <authorList>
            <person name="Donati C."/>
            <person name="Hiller N.L."/>
            <person name="Tettelin H."/>
            <person name="Muzzi A."/>
            <person name="Croucher N.J."/>
            <person name="Angiuoli S.V."/>
            <person name="Oggioni M."/>
            <person name="Dunning Hotopp J.C."/>
            <person name="Hu F.Z."/>
            <person name="Riley D.R."/>
            <person name="Covacci A."/>
            <person name="Mitchell T.J."/>
            <person name="Bentley S.D."/>
            <person name="Kilian M."/>
            <person name="Ehrlich G.D."/>
            <person name="Rappuoli R."/>
            <person name="Moxon E.R."/>
            <person name="Masignani V."/>
        </authorList>
    </citation>
    <scope>NUCLEOTIDE SEQUENCE [LARGE SCALE GENOMIC DNA]</scope>
    <source>
        <strain>70585</strain>
    </source>
</reference>
<comment type="function">
    <text evidence="1">Key enzyme in the regulation of glycerol uptake and metabolism. Catalyzes the phosphorylation of glycerol to yield sn-glycerol 3-phosphate.</text>
</comment>
<comment type="catalytic activity">
    <reaction evidence="1">
        <text>glycerol + ATP = sn-glycerol 3-phosphate + ADP + H(+)</text>
        <dbReference type="Rhea" id="RHEA:21644"/>
        <dbReference type="ChEBI" id="CHEBI:15378"/>
        <dbReference type="ChEBI" id="CHEBI:17754"/>
        <dbReference type="ChEBI" id="CHEBI:30616"/>
        <dbReference type="ChEBI" id="CHEBI:57597"/>
        <dbReference type="ChEBI" id="CHEBI:456216"/>
        <dbReference type="EC" id="2.7.1.30"/>
    </reaction>
</comment>
<comment type="activity regulation">
    <text evidence="1">Activated by phosphorylation and inhibited by fructose 1,6-bisphosphate (FBP).</text>
</comment>
<comment type="pathway">
    <text evidence="1">Polyol metabolism; glycerol degradation via glycerol kinase pathway; sn-glycerol 3-phosphate from glycerol: step 1/1.</text>
</comment>
<comment type="subunit">
    <text evidence="1">Homotetramer and homodimer (in equilibrium).</text>
</comment>
<comment type="PTM">
    <text evidence="1">The phosphoenolpyruvate-dependent sugar phosphotransferase system (PTS), including enzyme I, and histidine-containing protein (HPr) are required for the phosphorylation, which leads to the activation of the enzyme.</text>
</comment>
<comment type="similarity">
    <text evidence="1">Belongs to the FGGY kinase family.</text>
</comment>
<organism>
    <name type="scientific">Streptococcus pneumoniae (strain 70585)</name>
    <dbReference type="NCBI Taxonomy" id="488221"/>
    <lineage>
        <taxon>Bacteria</taxon>
        <taxon>Bacillati</taxon>
        <taxon>Bacillota</taxon>
        <taxon>Bacilli</taxon>
        <taxon>Lactobacillales</taxon>
        <taxon>Streptococcaceae</taxon>
        <taxon>Streptococcus</taxon>
    </lineage>
</organism>
<evidence type="ECO:0000255" key="1">
    <source>
        <dbReference type="HAMAP-Rule" id="MF_00186"/>
    </source>
</evidence>
<proteinExistence type="inferred from homology"/>
<sequence length="502" mass="55880">MSQEKYIMAIDQGTTSSRAIIFNKKGEKVSSSQKEFTQIFPQAGWVEHNANEIWNSVQSVIAGAFIESGVKPNQIEAIGITNQRETTVVWDKKTGLPIYNAIVWQSRQTAPLAEQLKSQGYVEKFHEKTGLIIDAYFSATKVRWILDHVEGAQERAEKGELLFGTIDTWLVWKLTDGAAHVTDYSNAARTMLYNIKELKWDDEILEILNIPKAILPEVRSNSEIYGKTAPFHFYGGEVPISGMAGDQQAALFGQLAFEPGMVKNTYGTGSFIIMNTGEEMQLSENNLLTTIGYGINGKVYYALEGSIFIAGSAIQWLRDGLRMVENSPESEKYARDSHNNDEVYVVPAFTGLGAPYWNQNARGSVFGLTRGTSKEDFIKATLQSIAYQVRDIIDTMQVDTQTTIQVLKVDGGAAMNNFLMQFQADILGIDIARAKNLETTALGAAFLAGLSVGYWKDLDELKLLNETGELFEPSMNESRKEQLYKGWKKAVKATQVFAEVDD</sequence>
<protein>
    <recommendedName>
        <fullName evidence="1">Glycerol kinase</fullName>
        <ecNumber evidence="1">2.7.1.30</ecNumber>
    </recommendedName>
    <alternativeName>
        <fullName evidence="1">ATP:glycerol 3-phosphotransferase</fullName>
    </alternativeName>
    <alternativeName>
        <fullName evidence="1">Glycerokinase</fullName>
        <shortName evidence="1">GK</shortName>
    </alternativeName>
</protein>
<dbReference type="EC" id="2.7.1.30" evidence="1"/>
<dbReference type="EMBL" id="CP000918">
    <property type="protein sequence ID" value="ACO16245.1"/>
    <property type="molecule type" value="Genomic_DNA"/>
</dbReference>
<dbReference type="RefSeq" id="WP_000076779.1">
    <property type="nucleotide sequence ID" value="NC_012468.1"/>
</dbReference>
<dbReference type="SMR" id="C1CBG2"/>
<dbReference type="KEGG" id="snm:SP70585_2312"/>
<dbReference type="HOGENOM" id="CLU_009281_2_3_9"/>
<dbReference type="UniPathway" id="UPA00618">
    <property type="reaction ID" value="UER00672"/>
</dbReference>
<dbReference type="Proteomes" id="UP000002211">
    <property type="component" value="Chromosome"/>
</dbReference>
<dbReference type="GO" id="GO:0005829">
    <property type="term" value="C:cytosol"/>
    <property type="evidence" value="ECO:0007669"/>
    <property type="project" value="TreeGrafter"/>
</dbReference>
<dbReference type="GO" id="GO:0005524">
    <property type="term" value="F:ATP binding"/>
    <property type="evidence" value="ECO:0007669"/>
    <property type="project" value="UniProtKB-UniRule"/>
</dbReference>
<dbReference type="GO" id="GO:0004370">
    <property type="term" value="F:glycerol kinase activity"/>
    <property type="evidence" value="ECO:0000250"/>
    <property type="project" value="UniProtKB"/>
</dbReference>
<dbReference type="GO" id="GO:0019563">
    <property type="term" value="P:glycerol catabolic process"/>
    <property type="evidence" value="ECO:0007669"/>
    <property type="project" value="UniProtKB-UniRule"/>
</dbReference>
<dbReference type="GO" id="GO:0006071">
    <property type="term" value="P:glycerol metabolic process"/>
    <property type="evidence" value="ECO:0000250"/>
    <property type="project" value="UniProtKB"/>
</dbReference>
<dbReference type="GO" id="GO:0006072">
    <property type="term" value="P:glycerol-3-phosphate metabolic process"/>
    <property type="evidence" value="ECO:0007669"/>
    <property type="project" value="InterPro"/>
</dbReference>
<dbReference type="CDD" id="cd07786">
    <property type="entry name" value="FGGY_EcGK_like"/>
    <property type="match status" value="1"/>
</dbReference>
<dbReference type="FunFam" id="3.30.420.40:FF:000007">
    <property type="entry name" value="Glycerol kinase"/>
    <property type="match status" value="1"/>
</dbReference>
<dbReference type="FunFam" id="3.30.420.40:FF:000008">
    <property type="entry name" value="Glycerol kinase"/>
    <property type="match status" value="1"/>
</dbReference>
<dbReference type="Gene3D" id="3.30.420.40">
    <property type="match status" value="2"/>
</dbReference>
<dbReference type="HAMAP" id="MF_00186">
    <property type="entry name" value="Glycerol_kin"/>
    <property type="match status" value="1"/>
</dbReference>
<dbReference type="InterPro" id="IPR043129">
    <property type="entry name" value="ATPase_NBD"/>
</dbReference>
<dbReference type="InterPro" id="IPR000577">
    <property type="entry name" value="Carb_kinase_FGGY"/>
</dbReference>
<dbReference type="InterPro" id="IPR018483">
    <property type="entry name" value="Carb_kinase_FGGY_CS"/>
</dbReference>
<dbReference type="InterPro" id="IPR018485">
    <property type="entry name" value="FGGY_C"/>
</dbReference>
<dbReference type="InterPro" id="IPR018484">
    <property type="entry name" value="FGGY_N"/>
</dbReference>
<dbReference type="InterPro" id="IPR005999">
    <property type="entry name" value="Glycerol_kin"/>
</dbReference>
<dbReference type="NCBIfam" id="TIGR01311">
    <property type="entry name" value="glycerol_kin"/>
    <property type="match status" value="1"/>
</dbReference>
<dbReference type="NCBIfam" id="NF000756">
    <property type="entry name" value="PRK00047.1"/>
    <property type="match status" value="1"/>
</dbReference>
<dbReference type="PANTHER" id="PTHR10196:SF69">
    <property type="entry name" value="GLYCEROL KINASE"/>
    <property type="match status" value="1"/>
</dbReference>
<dbReference type="PANTHER" id="PTHR10196">
    <property type="entry name" value="SUGAR KINASE"/>
    <property type="match status" value="1"/>
</dbReference>
<dbReference type="Pfam" id="PF02782">
    <property type="entry name" value="FGGY_C"/>
    <property type="match status" value="1"/>
</dbReference>
<dbReference type="Pfam" id="PF00370">
    <property type="entry name" value="FGGY_N"/>
    <property type="match status" value="1"/>
</dbReference>
<dbReference type="PIRSF" id="PIRSF000538">
    <property type="entry name" value="GlpK"/>
    <property type="match status" value="1"/>
</dbReference>
<dbReference type="SUPFAM" id="SSF53067">
    <property type="entry name" value="Actin-like ATPase domain"/>
    <property type="match status" value="2"/>
</dbReference>
<dbReference type="PROSITE" id="PS00933">
    <property type="entry name" value="FGGY_KINASES_1"/>
    <property type="match status" value="1"/>
</dbReference>
<dbReference type="PROSITE" id="PS00445">
    <property type="entry name" value="FGGY_KINASES_2"/>
    <property type="match status" value="1"/>
</dbReference>
<accession>C1CBG2</accession>
<keyword id="KW-0067">ATP-binding</keyword>
<keyword id="KW-0319">Glycerol metabolism</keyword>
<keyword id="KW-0418">Kinase</keyword>
<keyword id="KW-0547">Nucleotide-binding</keyword>
<keyword id="KW-0597">Phosphoprotein</keyword>
<keyword id="KW-0808">Transferase</keyword>